<dbReference type="GO" id="GO:0005576">
    <property type="term" value="C:extracellular region"/>
    <property type="evidence" value="ECO:0007669"/>
    <property type="project" value="UniProtKB-SubCell"/>
</dbReference>
<dbReference type="GO" id="GO:0007218">
    <property type="term" value="P:neuropeptide signaling pathway"/>
    <property type="evidence" value="ECO:0007669"/>
    <property type="project" value="UniProtKB-KW"/>
</dbReference>
<dbReference type="InterPro" id="IPR013202">
    <property type="entry name" value="Kinin_peptide"/>
</dbReference>
<dbReference type="Pfam" id="PF08260">
    <property type="entry name" value="Kinin"/>
    <property type="match status" value="1"/>
</dbReference>
<evidence type="ECO:0000269" key="1">
    <source>
    </source>
</evidence>
<evidence type="ECO:0000305" key="2"/>
<feature type="peptide" id="PRO_0000043964" description="Kinin-3">
    <location>
        <begin position="1"/>
        <end position="8"/>
    </location>
</feature>
<feature type="modified residue" description="Glycine amide" evidence="1">
    <location>
        <position position="8"/>
    </location>
</feature>
<reference key="1">
    <citation type="journal article" date="1997" name="Regul. Pept.">
        <title>Isolation and structural elucidation of eight kinins from the retrocerebral complex of the American cockroach, Periplaneta americana.</title>
        <authorList>
            <person name="Predel R."/>
            <person name="Kellner R."/>
            <person name="Rapus J."/>
            <person name="Penzlin H."/>
            <person name="Gade G."/>
        </authorList>
    </citation>
    <scope>PROTEIN SEQUENCE</scope>
    <scope>FUNCTION</scope>
    <scope>MASS SPECTROMETRY</scope>
    <scope>AMIDATION AT GLY-8</scope>
    <source>
        <tissue>Corpora cardiaca</tissue>
    </source>
</reference>
<sequence length="8" mass="909">DPSFNSWG</sequence>
<keyword id="KW-0027">Amidation</keyword>
<keyword id="KW-0903">Direct protein sequencing</keyword>
<keyword id="KW-0527">Neuropeptide</keyword>
<keyword id="KW-0964">Secreted</keyword>
<comment type="function">
    <text evidence="1">Mediates visceral muscle contractile activity (myotropic activity).</text>
</comment>
<comment type="subcellular location">
    <subcellularLocation>
        <location>Secreted</location>
    </subcellularLocation>
</comment>
<comment type="mass spectrometry" mass="907.92" method="Electrospray" evidence="1"/>
<comment type="similarity">
    <text evidence="2">Belongs to the kinin family.</text>
</comment>
<organism>
    <name type="scientific">Periplaneta americana</name>
    <name type="common">American cockroach</name>
    <name type="synonym">Blatta americana</name>
    <dbReference type="NCBI Taxonomy" id="6978"/>
    <lineage>
        <taxon>Eukaryota</taxon>
        <taxon>Metazoa</taxon>
        <taxon>Ecdysozoa</taxon>
        <taxon>Arthropoda</taxon>
        <taxon>Hexapoda</taxon>
        <taxon>Insecta</taxon>
        <taxon>Pterygota</taxon>
        <taxon>Neoptera</taxon>
        <taxon>Polyneoptera</taxon>
        <taxon>Dictyoptera</taxon>
        <taxon>Blattodea</taxon>
        <taxon>Blattoidea</taxon>
        <taxon>Blattidae</taxon>
        <taxon>Blattinae</taxon>
        <taxon>Periplaneta</taxon>
    </lineage>
</organism>
<name>KINI3_PERAM</name>
<protein>
    <recommendedName>
        <fullName>Kinin-3</fullName>
    </recommendedName>
    <alternativeName>
        <fullName>Pea-K-3</fullName>
    </alternativeName>
</protein>
<proteinExistence type="evidence at protein level"/>
<accession>P82687</accession>